<comment type="function">
    <text evidence="2">Essential core component of the TIM22 complex, a complex that mediates the import and insertion of multi-pass transmembrane proteins into the mitochondrial inner membrane. In the TIM22 complex, it constitutes the voltage-activated and signal-gated channel. Forms a twin-pore translocase that uses the membrane potential as external driving force in 2 voltage-dependent steps (By similarity).</text>
</comment>
<comment type="subunit">
    <text evidence="2">Component of the TIM22 complex, whose core is composed of TIM22 and TIM54, associated with the 70 kDa heterohexamer composed of TIM9 and TIM10 (or TIM8 and TIM13).</text>
</comment>
<comment type="subcellular location">
    <subcellularLocation>
        <location evidence="2">Mitochondrion inner membrane</location>
        <topology evidence="3">Multi-pass membrane protein</topology>
    </subcellularLocation>
</comment>
<comment type="similarity">
    <text evidence="4">Belongs to the Tim17/Tim22/Tim23 family.</text>
</comment>
<evidence type="ECO:0000250" key="1">
    <source>
        <dbReference type="UniProtKB" id="A0A1D8PI78"/>
    </source>
</evidence>
<evidence type="ECO:0000250" key="2">
    <source>
        <dbReference type="UniProtKB" id="Q12328"/>
    </source>
</evidence>
<evidence type="ECO:0000255" key="3"/>
<evidence type="ECO:0000305" key="4"/>
<sequence length="201" mass="21099">MVYRGFGLEHISPPVNKPFAEMTPEEQGERGAQMMMEFMTSCPGKSAISGVTGFALGGVFGLFMASMAYDTPLHTPAPVGAGPGAGIPGAPTLQQMADLPLKQQIKIQFADMGRRAYSSAKNFGYIGMIYSGVECTIESLRAKNDLYNGVAAGCLTGGGLAYKSGPSAALIGCAGFAAFSTAIDLYMRSENGRPPKNDFDE</sequence>
<accession>Q75E80</accession>
<gene>
    <name type="primary">TIM22</name>
    <name type="ordered locus">ABL148C</name>
</gene>
<protein>
    <recommendedName>
        <fullName>Mitochondrial import inner membrane translocase subunit TIM22</fullName>
    </recommendedName>
</protein>
<feature type="chain" id="PRO_0000228086" description="Mitochondrial import inner membrane translocase subunit TIM22">
    <location>
        <begin position="1"/>
        <end position="201"/>
    </location>
</feature>
<feature type="transmembrane region" description="Helical" evidence="3">
    <location>
        <begin position="47"/>
        <end position="67"/>
    </location>
</feature>
<feature type="transmembrane region" description="Helical" evidence="3">
    <location>
        <begin position="146"/>
        <end position="162"/>
    </location>
</feature>
<feature type="transmembrane region" description="Helical" evidence="3">
    <location>
        <begin position="167"/>
        <end position="187"/>
    </location>
</feature>
<feature type="disulfide bond" evidence="1">
    <location>
        <begin position="42"/>
        <end position="135"/>
    </location>
</feature>
<feature type="disulfide bond" evidence="1">
    <location>
        <begin position="154"/>
        <end position="173"/>
    </location>
</feature>
<reference key="1">
    <citation type="journal article" date="2004" name="Science">
        <title>The Ashbya gossypii genome as a tool for mapping the ancient Saccharomyces cerevisiae genome.</title>
        <authorList>
            <person name="Dietrich F.S."/>
            <person name="Voegeli S."/>
            <person name="Brachat S."/>
            <person name="Lerch A."/>
            <person name="Gates K."/>
            <person name="Steiner S."/>
            <person name="Mohr C."/>
            <person name="Poehlmann R."/>
            <person name="Luedi P."/>
            <person name="Choi S."/>
            <person name="Wing R.A."/>
            <person name="Flavier A."/>
            <person name="Gaffney T.D."/>
            <person name="Philippsen P."/>
        </authorList>
    </citation>
    <scope>NUCLEOTIDE SEQUENCE [LARGE SCALE GENOMIC DNA]</scope>
    <source>
        <strain>ATCC 10895 / CBS 109.51 / FGSC 9923 / NRRL Y-1056</strain>
    </source>
</reference>
<reference key="2">
    <citation type="journal article" date="2013" name="G3 (Bethesda)">
        <title>Genomes of Ashbya fungi isolated from insects reveal four mating-type loci, numerous translocations, lack of transposons, and distinct gene duplications.</title>
        <authorList>
            <person name="Dietrich F.S."/>
            <person name="Voegeli S."/>
            <person name="Kuo S."/>
            <person name="Philippsen P."/>
        </authorList>
    </citation>
    <scope>GENOME REANNOTATION</scope>
    <source>
        <strain>ATCC 10895 / CBS 109.51 / FGSC 9923 / NRRL Y-1056</strain>
    </source>
</reference>
<proteinExistence type="inferred from homology"/>
<dbReference type="EMBL" id="AE016815">
    <property type="protein sequence ID" value="AAS50623.1"/>
    <property type="molecule type" value="Genomic_DNA"/>
</dbReference>
<dbReference type="RefSeq" id="NP_982799.1">
    <property type="nucleotide sequence ID" value="NM_208152.1"/>
</dbReference>
<dbReference type="SMR" id="Q75E80"/>
<dbReference type="FunCoup" id="Q75E80">
    <property type="interactions" value="686"/>
</dbReference>
<dbReference type="STRING" id="284811.Q75E80"/>
<dbReference type="EnsemblFungi" id="AAS50623">
    <property type="protein sequence ID" value="AAS50623"/>
    <property type="gene ID" value="AGOS_ABL148C"/>
</dbReference>
<dbReference type="GeneID" id="4618879"/>
<dbReference type="KEGG" id="ago:AGOS_ABL148C"/>
<dbReference type="eggNOG" id="KOG3225">
    <property type="taxonomic scope" value="Eukaryota"/>
</dbReference>
<dbReference type="HOGENOM" id="CLU_091077_1_0_1"/>
<dbReference type="InParanoid" id="Q75E80"/>
<dbReference type="OMA" id="VNPNMAD"/>
<dbReference type="OrthoDB" id="75343at2759"/>
<dbReference type="Proteomes" id="UP000000591">
    <property type="component" value="Chromosome II"/>
</dbReference>
<dbReference type="GO" id="GO:0042721">
    <property type="term" value="C:TIM22 mitochondrial import inner membrane insertion complex"/>
    <property type="evidence" value="ECO:0000318"/>
    <property type="project" value="GO_Central"/>
</dbReference>
<dbReference type="GO" id="GO:0030943">
    <property type="term" value="F:mitochondrion targeting sequence binding"/>
    <property type="evidence" value="ECO:0000318"/>
    <property type="project" value="GO_Central"/>
</dbReference>
<dbReference type="GO" id="GO:0008320">
    <property type="term" value="F:protein transmembrane transporter activity"/>
    <property type="evidence" value="ECO:0000318"/>
    <property type="project" value="GO_Central"/>
</dbReference>
<dbReference type="GO" id="GO:0005198">
    <property type="term" value="F:structural molecule activity"/>
    <property type="evidence" value="ECO:0007669"/>
    <property type="project" value="EnsemblFungi"/>
</dbReference>
<dbReference type="GO" id="GO:0045039">
    <property type="term" value="P:protein insertion into mitochondrial inner membrane"/>
    <property type="evidence" value="ECO:0000318"/>
    <property type="project" value="GO_Central"/>
</dbReference>
<dbReference type="InterPro" id="IPR039175">
    <property type="entry name" value="TIM22"/>
</dbReference>
<dbReference type="PANTHER" id="PTHR14110">
    <property type="entry name" value="MITOCHONDRIAL IMPORT INNER MEMBRANE TRANSLOCASE SUBUNIT TIM22"/>
    <property type="match status" value="1"/>
</dbReference>
<dbReference type="PANTHER" id="PTHR14110:SF0">
    <property type="entry name" value="MITOCHONDRIAL IMPORT INNER MEMBRANE TRANSLOCASE SUBUNIT TIM22"/>
    <property type="match status" value="1"/>
</dbReference>
<dbReference type="Pfam" id="PF02466">
    <property type="entry name" value="Tim17"/>
    <property type="match status" value="1"/>
</dbReference>
<keyword id="KW-1015">Disulfide bond</keyword>
<keyword id="KW-0472">Membrane</keyword>
<keyword id="KW-0496">Mitochondrion</keyword>
<keyword id="KW-0999">Mitochondrion inner membrane</keyword>
<keyword id="KW-0653">Protein transport</keyword>
<keyword id="KW-1185">Reference proteome</keyword>
<keyword id="KW-0811">Translocation</keyword>
<keyword id="KW-0812">Transmembrane</keyword>
<keyword id="KW-1133">Transmembrane helix</keyword>
<keyword id="KW-0813">Transport</keyword>
<name>TIM22_EREGS</name>
<organism>
    <name type="scientific">Eremothecium gossypii (strain ATCC 10895 / CBS 109.51 / FGSC 9923 / NRRL Y-1056)</name>
    <name type="common">Yeast</name>
    <name type="synonym">Ashbya gossypii</name>
    <dbReference type="NCBI Taxonomy" id="284811"/>
    <lineage>
        <taxon>Eukaryota</taxon>
        <taxon>Fungi</taxon>
        <taxon>Dikarya</taxon>
        <taxon>Ascomycota</taxon>
        <taxon>Saccharomycotina</taxon>
        <taxon>Saccharomycetes</taxon>
        <taxon>Saccharomycetales</taxon>
        <taxon>Saccharomycetaceae</taxon>
        <taxon>Eremothecium</taxon>
    </lineage>
</organism>